<keyword id="KW-0903">Direct protein sequencing</keyword>
<keyword id="KW-0328">Glycosyltransferase</keyword>
<keyword id="KW-0597">Phosphoprotein</keyword>
<keyword id="KW-1185">Reference proteome</keyword>
<keyword id="KW-0808">Transferase</keyword>
<accession>P31928</accession>
<comment type="function">
    <text evidence="4">Plays a role in photosynthetic sucrose synthesis by catalyzing the rate-limiting step of sucrose biosynthesis from UDP-glucose and fructose- 6-phosphate. Involved in the regulation of carbon partitioning in the leaves of plants. May regulate the synthesis of sucrose and therefore play a major role as a limiting factor in the export of photoassimilates out of the leaf. Plays a role for sucrose availability that is essential for plant growth and fiber elongation.</text>
</comment>
<comment type="catalytic activity">
    <reaction>
        <text>beta-D-fructose 6-phosphate + UDP-alpha-D-glucose = sucrose 6(F)-phosphate + UDP + H(+)</text>
        <dbReference type="Rhea" id="RHEA:22172"/>
        <dbReference type="ChEBI" id="CHEBI:15378"/>
        <dbReference type="ChEBI" id="CHEBI:57634"/>
        <dbReference type="ChEBI" id="CHEBI:57723"/>
        <dbReference type="ChEBI" id="CHEBI:58223"/>
        <dbReference type="ChEBI" id="CHEBI:58885"/>
        <dbReference type="EC" id="2.4.1.14"/>
    </reaction>
</comment>
<comment type="activity regulation">
    <text>Activity is regulated by phosphorylation and moderated by concentration of metabolites and light.</text>
</comment>
<comment type="pathway">
    <text>Glycan biosynthesis; sucrose biosynthesis; sucrose from D-fructose 6-phosphate and UDP-alpha-D-glucose: step 1/2.</text>
</comment>
<comment type="subunit">
    <text evidence="1">Homodimer or homotetramer.</text>
</comment>
<comment type="PTM">
    <text evidence="3 4">Phosphorylated at Ser-158 and Ser-424.</text>
</comment>
<comment type="similarity">
    <text evidence="5">Belongs to the glycosyltransferase 1 family.</text>
</comment>
<dbReference type="EC" id="2.4.1.14"/>
<dbReference type="EMBL" id="L04803">
    <property type="protein sequence ID" value="AAA20092.1"/>
    <property type="molecule type" value="mRNA"/>
</dbReference>
<dbReference type="EMBL" id="S54379">
    <property type="protein sequence ID" value="AAC60545.2"/>
    <property type="molecule type" value="mRNA"/>
</dbReference>
<dbReference type="PIR" id="JQ2277">
    <property type="entry name" value="JQ2277"/>
</dbReference>
<dbReference type="SMR" id="P31928"/>
<dbReference type="IntAct" id="P31928">
    <property type="interactions" value="1"/>
</dbReference>
<dbReference type="CAZy" id="GT4">
    <property type="family name" value="Glycosyltransferase Family 4"/>
</dbReference>
<dbReference type="iPTMnet" id="P31928"/>
<dbReference type="OrthoDB" id="512920at2759"/>
<dbReference type="BioCyc" id="MetaCyc:MONOMER-1742"/>
<dbReference type="BRENDA" id="2.4.1.14">
    <property type="organism ID" value="5812"/>
</dbReference>
<dbReference type="UniPathway" id="UPA00371">
    <property type="reaction ID" value="UER00545"/>
</dbReference>
<dbReference type="Proteomes" id="UP001155700">
    <property type="component" value="Unplaced"/>
</dbReference>
<dbReference type="GO" id="GO:0046524">
    <property type="term" value="F:sucrose-phosphate synthase activity"/>
    <property type="evidence" value="ECO:0007669"/>
    <property type="project" value="UniProtKB-EC"/>
</dbReference>
<dbReference type="GO" id="GO:0005986">
    <property type="term" value="P:sucrose biosynthetic process"/>
    <property type="evidence" value="ECO:0007669"/>
    <property type="project" value="UniProtKB-UniPathway"/>
</dbReference>
<dbReference type="CDD" id="cd16419">
    <property type="entry name" value="HAD_SPS"/>
    <property type="match status" value="1"/>
</dbReference>
<dbReference type="FunFam" id="3.40.50.2000:FF:000112">
    <property type="entry name" value="Sucrose-phosphate synthase 1"/>
    <property type="match status" value="1"/>
</dbReference>
<dbReference type="Gene3D" id="3.40.50.2000">
    <property type="entry name" value="Glycogen Phosphorylase B"/>
    <property type="match status" value="2"/>
</dbReference>
<dbReference type="InterPro" id="IPR001296">
    <property type="entry name" value="Glyco_trans_1"/>
</dbReference>
<dbReference type="InterPro" id="IPR006380">
    <property type="entry name" value="SPP-like_dom"/>
</dbReference>
<dbReference type="InterPro" id="IPR044161">
    <property type="entry name" value="SPS"/>
</dbReference>
<dbReference type="InterPro" id="IPR035659">
    <property type="entry name" value="SPS_C"/>
</dbReference>
<dbReference type="InterPro" id="IPR012819">
    <property type="entry name" value="SPS_pln"/>
</dbReference>
<dbReference type="InterPro" id="IPR000368">
    <property type="entry name" value="Sucrose_synth_GT-B1"/>
</dbReference>
<dbReference type="NCBIfam" id="TIGR02468">
    <property type="entry name" value="sucrsPsyn_pln"/>
    <property type="match status" value="1"/>
</dbReference>
<dbReference type="PANTHER" id="PTHR46039:SF7">
    <property type="entry name" value="SUCROSE-PHOSPHATE SYNTHASE 2-RELATED"/>
    <property type="match status" value="1"/>
</dbReference>
<dbReference type="PANTHER" id="PTHR46039">
    <property type="entry name" value="SUCROSE-PHOSPHATE SYNTHASE 3-RELATED"/>
    <property type="match status" value="1"/>
</dbReference>
<dbReference type="Pfam" id="PF00534">
    <property type="entry name" value="Glycos_transf_1"/>
    <property type="match status" value="1"/>
</dbReference>
<dbReference type="Pfam" id="PF00862">
    <property type="entry name" value="GT-B_Sucrose_synth"/>
    <property type="match status" value="1"/>
</dbReference>
<dbReference type="Pfam" id="PF05116">
    <property type="entry name" value="S6PP"/>
    <property type="match status" value="1"/>
</dbReference>
<dbReference type="SUPFAM" id="SSF53756">
    <property type="entry name" value="UDP-Glycosyltransferase/glycogen phosphorylase"/>
    <property type="match status" value="1"/>
</dbReference>
<gene>
    <name type="primary">SPS1</name>
</gene>
<protein>
    <recommendedName>
        <fullName>Sucrose-phosphate synthase</fullName>
        <ecNumber>2.4.1.14</ecNumber>
    </recommendedName>
    <alternativeName>
        <fullName>UDP-glucose-fructose-phosphate glucosyltransferase</fullName>
    </alternativeName>
</protein>
<name>SPSA_SPIOL</name>
<evidence type="ECO:0000250" key="1"/>
<evidence type="ECO:0000256" key="2">
    <source>
        <dbReference type="SAM" id="MobiDB-lite"/>
    </source>
</evidence>
<evidence type="ECO:0000269" key="3">
    <source>
    </source>
</evidence>
<evidence type="ECO:0000269" key="4">
    <source>
    </source>
</evidence>
<evidence type="ECO:0000305" key="5"/>
<organism>
    <name type="scientific">Spinacia oleracea</name>
    <name type="common">Spinach</name>
    <dbReference type="NCBI Taxonomy" id="3562"/>
    <lineage>
        <taxon>Eukaryota</taxon>
        <taxon>Viridiplantae</taxon>
        <taxon>Streptophyta</taxon>
        <taxon>Embryophyta</taxon>
        <taxon>Tracheophyta</taxon>
        <taxon>Spermatophyta</taxon>
        <taxon>Magnoliopsida</taxon>
        <taxon>eudicotyledons</taxon>
        <taxon>Gunneridae</taxon>
        <taxon>Pentapetalae</taxon>
        <taxon>Caryophyllales</taxon>
        <taxon>Chenopodiaceae</taxon>
        <taxon>Chenopodioideae</taxon>
        <taxon>Anserineae</taxon>
        <taxon>Spinacia</taxon>
    </lineage>
</organism>
<reference key="1">
    <citation type="journal article" date="1993" name="Plant Physiol.">
        <title>Identification of the uridine-binding domain of sucrose-phosphate synthase. Expression of a region of the protein that photoaffinity labels with 5-azidouridine diphosphate-glucose.</title>
        <authorList>
            <person name="Salvucci M.E."/>
            <person name="Klein R.R."/>
        </authorList>
    </citation>
    <scope>NUCLEOTIDE SEQUENCE [MRNA]</scope>
    <scope>PARTIAL PROTEIN SEQUENCE</scope>
</reference>
<reference key="2">
    <citation type="journal article" date="1993" name="Planta">
        <title>Purification, cloning and expression of spinach leaf sucrose-phosphate synthase in Escherichia coli.</title>
        <authorList>
            <person name="Sonnewald U."/>
            <person name="Quick W.P."/>
            <person name="Macrae E."/>
            <person name="Krause K.P."/>
            <person name="Stitt M."/>
        </authorList>
    </citation>
    <scope>NUCLEOTIDE SEQUENCE [MRNA]</scope>
    <source>
        <tissue>Leaf</tissue>
    </source>
</reference>
<reference key="3">
    <citation type="journal article" date="1993" name="Arch. Biochem. Biophys.">
        <title>Identification of the major regulatory phosphorylation site in sucrose-phosphate synthase.</title>
        <authorList>
            <person name="McMichael R.W. Jr."/>
            <person name="Klein R.R."/>
            <person name="Salvucci M.E."/>
            <person name="Huber S.C."/>
        </authorList>
    </citation>
    <scope>PROTEIN SEQUENCE OF 156-170</scope>
    <scope>PHOSPHORYLATION AT SER-158</scope>
</reference>
<reference key="4">
    <citation type="journal article" date="1997" name="Plant Physiol.">
        <title>Protein phosphorylation as a mechanism for osmotic-stress activation of sucrose-phosphate synthase in spinach leaves.</title>
        <authorList>
            <person name="Toroser D."/>
            <person name="Huber S.C."/>
        </authorList>
    </citation>
    <scope>FUNCTION</scope>
    <scope>PHOSPHORYLATION AT SER-158 AND SER-424</scope>
</reference>
<sequence>MAGNDWINSYLEAILDVGGQGIDASTGKTSTAPPSLLLRERGHFSPSRYFVEEVISGFDETDLHRSWVRAASTRSPQERNTRLENLCWRIWNLARKKKQIEGEEAQRLAKRHVERERGRREATADMSEDLSEGERGDTVADMLFASESTKGRMRRISSVEMMDNWANTFKEKKLYVVLISLHGLIRGENMELGRDSDTGGQVKYVVELARALGSMPGVYRVDLLTRQVSAPGVDWSYGEPTEMLSSRNSENSTEQLGESSGAYIIRIPFGPKDKYVAKELLWPYIPEFVDGALSHIKQMSKVLGEQIGGGLPVWPASVHGHYADAGDSAALLSGALNVPMVFTGHSLGRDKLDQLLKQGRLSREEVDATYKIMRRIEAEELCLDASEIVITSTRQEIEEQWQLYHGFDLVLERKLRARMRRGVSCHGRFMPRMAKIPPGMEFNHIAPEDADMDTDIDGHKESNANPDPVIWSEIMRFFSNGRKPMILALARPDPKKNLTTLVKAFGECRPLRELANLTLIIGNRDDIDEMSTTSSSVLISILKLIDKYDLYGQVAYPKHHKQSDVPDIYRLAAKTKGVFINPAFIEPFGLTLIEAAAYGLPIVATKNGGPVDIIGVLDNGLLIDPHDQKSIADALLKLVADKHLWTKCRQNGLKNIHLFSWPEHCKNYLSRIASCKPRQPNWQRIDEGSENSDTDSAGDSLRDIQDISLNLKLSLDAERTEGGNSFDDSLDSEEANAKRKIENAVAKLSKSMDKAQVDVGNLKFPAIRRRKCIFVIALDCDVTSDLLQVIKTVISIVGEQRPTGSIGFILSTSMTLSEVDSLLDSGGLRPADFDAFICNSGSELYYPSTDYSESPFVLDQDYYSHIDYRWGGEGLWKTLVKWAASVNEKKGENAPNIVIADETSSTTHCYAFKVNDFTLAPPAKELRKMMRIQALRCHAIYCQNGTRLNVIPVLASRSQALRYLFMRWGVELSNFVVFVGESGDTDYEGLLGGVHKTVILKGIGSNTSNFHATRAYPMEHVMPVDSPNMFQTGGCNIDDISDALSKIGCLKAQKSL</sequence>
<proteinExistence type="evidence at protein level"/>
<feature type="chain" id="PRO_0000204674" description="Sucrose-phosphate synthase">
    <location>
        <begin position="1"/>
        <end position="1056"/>
    </location>
</feature>
<feature type="region of interest" description="Disordered" evidence="2">
    <location>
        <begin position="112"/>
        <end position="132"/>
    </location>
</feature>
<feature type="region of interest" description="Disordered" evidence="2">
    <location>
        <begin position="681"/>
        <end position="700"/>
    </location>
</feature>
<feature type="compositionally biased region" description="Basic and acidic residues" evidence="2">
    <location>
        <begin position="112"/>
        <end position="123"/>
    </location>
</feature>
<feature type="modified residue" description="Phosphoserine" evidence="3 4">
    <location>
        <position position="158"/>
    </location>
</feature>
<feature type="modified residue" description="Phosphoserine" evidence="4">
    <location>
        <position position="424"/>
    </location>
</feature>
<feature type="sequence conflict" description="In Ref. 2; AAC60545." evidence="5" ref="2">
    <original>V</original>
    <variation>I</variation>
    <location>
        <position position="17"/>
    </location>
</feature>
<feature type="sequence conflict" description="In Ref. 2; AAC60545." evidence="5" ref="2">
    <original>RAASTRS</original>
    <variation>ALHQLAG</variation>
    <location>
        <begin position="69"/>
        <end position="75"/>
    </location>
</feature>
<feature type="sequence conflict" description="In Ref. 2; AAC60545." evidence="5" ref="2">
    <original>A</original>
    <variation>R</variation>
    <location>
        <position position="604"/>
    </location>
</feature>
<feature type="sequence conflict" description="In Ref. 2; AAC60545." evidence="5" ref="2">
    <original>HL</original>
    <variation>QV</variation>
    <location>
        <begin position="643"/>
        <end position="644"/>
    </location>
</feature>
<feature type="sequence conflict" description="In Ref. 2; AAC60545." evidence="5" ref="2">
    <original>R</original>
    <variation>W</variation>
    <location>
        <position position="947"/>
    </location>
</feature>
<feature type="sequence conflict" description="In Ref. 2; AAC60545." evidence="5" ref="2">
    <original>DD</original>
    <variation>EH</variation>
    <location>
        <begin position="1038"/>
        <end position="1039"/>
    </location>
</feature>